<protein>
    <recommendedName>
        <fullName evidence="11">PAB1-binding protein 1</fullName>
    </recommendedName>
    <alternativeName>
        <fullName evidence="11">Poly(A)-binding protein-binding protein</fullName>
    </alternativeName>
</protein>
<keyword id="KW-0963">Cytoplasm</keyword>
<keyword id="KW-1017">Isopeptide bond</keyword>
<keyword id="KW-0496">Mitochondrion</keyword>
<keyword id="KW-0539">Nucleus</keyword>
<keyword id="KW-0597">Phosphoprotein</keyword>
<keyword id="KW-1185">Reference proteome</keyword>
<keyword id="KW-0832">Ubl conjugation</keyword>
<feature type="chain" id="PRO_0000058244" description="PAB1-binding protein 1">
    <location>
        <begin position="1"/>
        <end position="722"/>
    </location>
</feature>
<feature type="domain" description="Sm" evidence="1">
    <location>
        <begin position="51"/>
        <end position="107"/>
    </location>
</feature>
<feature type="region of interest" description="Disordered" evidence="2">
    <location>
        <begin position="1"/>
        <end position="38"/>
    </location>
</feature>
<feature type="region of interest" description="Disordered" evidence="2">
    <location>
        <begin position="305"/>
        <end position="380"/>
    </location>
</feature>
<feature type="region of interest" description="Disordered" evidence="2">
    <location>
        <begin position="412"/>
        <end position="488"/>
    </location>
</feature>
<feature type="region of interest" description="Disordered" evidence="2">
    <location>
        <begin position="683"/>
        <end position="722"/>
    </location>
</feature>
<feature type="compositionally biased region" description="Basic and acidic residues" evidence="2">
    <location>
        <begin position="1"/>
        <end position="10"/>
    </location>
</feature>
<feature type="compositionally biased region" description="Polar residues" evidence="2">
    <location>
        <begin position="11"/>
        <end position="38"/>
    </location>
</feature>
<feature type="compositionally biased region" description="Low complexity" evidence="2">
    <location>
        <begin position="307"/>
        <end position="316"/>
    </location>
</feature>
<feature type="compositionally biased region" description="Low complexity" evidence="2">
    <location>
        <begin position="338"/>
        <end position="347"/>
    </location>
</feature>
<feature type="compositionally biased region" description="Low complexity" evidence="2">
    <location>
        <begin position="356"/>
        <end position="370"/>
    </location>
</feature>
<feature type="compositionally biased region" description="Low complexity" evidence="2">
    <location>
        <begin position="412"/>
        <end position="421"/>
    </location>
</feature>
<feature type="compositionally biased region" description="Polar residues" evidence="2">
    <location>
        <begin position="429"/>
        <end position="455"/>
    </location>
</feature>
<feature type="compositionally biased region" description="Low complexity" evidence="2">
    <location>
        <begin position="456"/>
        <end position="471"/>
    </location>
</feature>
<feature type="compositionally biased region" description="Basic residues" evidence="2">
    <location>
        <begin position="698"/>
        <end position="722"/>
    </location>
</feature>
<feature type="modified residue" description="Phosphoserine" evidence="12 13 14">
    <location>
        <position position="106"/>
    </location>
</feature>
<feature type="modified residue" description="Phosphothreonine" evidence="14">
    <location>
        <position position="193"/>
    </location>
</feature>
<feature type="modified residue" description="Phosphoserine" evidence="13">
    <location>
        <position position="215"/>
    </location>
</feature>
<feature type="modified residue" description="Phosphoserine" evidence="12 13">
    <location>
        <position position="436"/>
    </location>
</feature>
<feature type="cross-link" description="Glycyl lysine isopeptide (Lys-Gly) (interchain with G-Cter in ubiquitin)" evidence="15">
    <location>
        <position position="344"/>
    </location>
</feature>
<evidence type="ECO:0000255" key="1">
    <source>
        <dbReference type="PROSITE-ProRule" id="PRU01346"/>
    </source>
</evidence>
<evidence type="ECO:0000256" key="2">
    <source>
        <dbReference type="SAM" id="MobiDB-lite"/>
    </source>
</evidence>
<evidence type="ECO:0000269" key="3">
    <source>
    </source>
</evidence>
<evidence type="ECO:0000269" key="4">
    <source>
    </source>
</evidence>
<evidence type="ECO:0000269" key="5">
    <source>
    </source>
</evidence>
<evidence type="ECO:0000269" key="6">
    <source>
    </source>
</evidence>
<evidence type="ECO:0000269" key="7">
    <source>
    </source>
</evidence>
<evidence type="ECO:0000269" key="8">
    <source>
    </source>
</evidence>
<evidence type="ECO:0000269" key="9">
    <source>
    </source>
</evidence>
<evidence type="ECO:0000269" key="10">
    <source>
    </source>
</evidence>
<evidence type="ECO:0000305" key="11"/>
<evidence type="ECO:0007744" key="12">
    <source>
    </source>
</evidence>
<evidence type="ECO:0007744" key="13">
    <source>
    </source>
</evidence>
<evidence type="ECO:0007744" key="14">
    <source>
    </source>
</evidence>
<evidence type="ECO:0007744" key="15">
    <source>
    </source>
</evidence>
<sequence>MKGNFRKRDSSTNSRKGGNSDSNYTNGGVPNQNNSSMFYENPEITRNFDDRQDYLLANSIGSDVTVTVTSGVKYTGLLVSCNLESTNGIDVVLRFPRVADSGVSDSVDDLAKTLGETLLIHGEDVAELELKNIDLSLDEKWENSKAQETTPARTNIEKERVNGESNEVTKFRTDVDISGSGREIKERKLEKWTPEEGAEHFDINKGKALEDDSASWDQFAVNEKKFGVKSTFDEHLYTTKINKDDPNYSKRLQEAERIAKEIESQGTSGNIHIAEDRGIIIDDSGLDEEDLYSGVDRRGDELLAALKSNSKPNSNKGNRYVPPTLRQQPHHMDPAIISSSNSNKNENAVSTDTSTPAAAGAPEGKPPQKTSKNKKSLSSKEAQIEELKKFSEKFKVPYDIPKDMLEVLKRSSSTLKSNSSLPPKPISKTPSAKTVSPTTQISAGKSESRRSGSNISQGQSSTGHTTRSSTSLRRRNHGSFFGAKNPHTNDAKRVLFGKSFNMFIKSKEAHDEKKKGDDASENMEPFFIEKPYFTAPTWLNTIEESYKTFFPDEDTAIQEAQTRFQQRQLNSMGNAVPGMNPAMGMNMGGMMGFPMGGPSASPNPMMNGFAAGSMGMYMPFQPQPMFYHPSMPQMMPVMGSNGAEEGGGNISPHVPAGFMAAGPGAPMGAFGYPGGIPFQGMMGSGPSGMPANGSAMHSHGHSRNYHQTSHHGHHNSSTSGHK</sequence>
<gene>
    <name type="primary">PBP1</name>
    <name type="synonym">MRS16</name>
    <name type="ordered locus">YGR178C</name>
</gene>
<accession>P53297</accession>
<accession>D6VUW2</accession>
<reference key="1">
    <citation type="thesis" date="1996" institute="Vienna Biocentre" country="Austria">
        <title>Sequencing and characterization of a suppressor of the pet- phenotype in a Saccharomyces cerevisiae strain without mitochondrial group II introns.</title>
        <authorList>
            <person name="Mecklenbrauker I."/>
        </authorList>
    </citation>
    <scope>NUCLEOTIDE SEQUENCE [GENOMIC DNA]</scope>
    <source>
        <strain>ATCC 44774 / DBY747</strain>
    </source>
</reference>
<reference key="2">
    <citation type="journal article" date="1997" name="Nature">
        <title>The nucleotide sequence of Saccharomyces cerevisiae chromosome VII.</title>
        <authorList>
            <person name="Tettelin H."/>
            <person name="Agostoni-Carbone M.L."/>
            <person name="Albermann K."/>
            <person name="Albers M."/>
            <person name="Arroyo J."/>
            <person name="Backes U."/>
            <person name="Barreiros T."/>
            <person name="Bertani I."/>
            <person name="Bjourson A.J."/>
            <person name="Brueckner M."/>
            <person name="Bruschi C.V."/>
            <person name="Carignani G."/>
            <person name="Castagnoli L."/>
            <person name="Cerdan E."/>
            <person name="Clemente M.L."/>
            <person name="Coblenz A."/>
            <person name="Coglievina M."/>
            <person name="Coissac E."/>
            <person name="Defoor E."/>
            <person name="Del Bino S."/>
            <person name="Delius H."/>
            <person name="Delneri D."/>
            <person name="de Wergifosse P."/>
            <person name="Dujon B."/>
            <person name="Durand P."/>
            <person name="Entian K.-D."/>
            <person name="Eraso P."/>
            <person name="Escribano V."/>
            <person name="Fabiani L."/>
            <person name="Fartmann B."/>
            <person name="Feroli F."/>
            <person name="Feuermann M."/>
            <person name="Frontali L."/>
            <person name="Garcia-Gonzalez M."/>
            <person name="Garcia-Saez M.I."/>
            <person name="Goffeau A."/>
            <person name="Guerreiro P."/>
            <person name="Hani J."/>
            <person name="Hansen M."/>
            <person name="Hebling U."/>
            <person name="Hernandez K."/>
            <person name="Heumann K."/>
            <person name="Hilger F."/>
            <person name="Hofmann B."/>
            <person name="Indge K.J."/>
            <person name="James C.M."/>
            <person name="Klima R."/>
            <person name="Koetter P."/>
            <person name="Kramer B."/>
            <person name="Kramer W."/>
            <person name="Lauquin G."/>
            <person name="Leuther H."/>
            <person name="Louis E.J."/>
            <person name="Maillier E."/>
            <person name="Marconi A."/>
            <person name="Martegani E."/>
            <person name="Mazon M.J."/>
            <person name="Mazzoni C."/>
            <person name="McReynolds A.D.K."/>
            <person name="Melchioretto P."/>
            <person name="Mewes H.-W."/>
            <person name="Minenkova O."/>
            <person name="Mueller-Auer S."/>
            <person name="Nawrocki A."/>
            <person name="Netter P."/>
            <person name="Neu R."/>
            <person name="Nombela C."/>
            <person name="Oliver S.G."/>
            <person name="Panzeri L."/>
            <person name="Paoluzi S."/>
            <person name="Plevani P."/>
            <person name="Portetelle D."/>
            <person name="Portillo F."/>
            <person name="Potier S."/>
            <person name="Purnelle B."/>
            <person name="Rieger M."/>
            <person name="Riles L."/>
            <person name="Rinaldi T."/>
            <person name="Robben J."/>
            <person name="Rodrigues-Pousada C."/>
            <person name="Rodriguez-Belmonte E."/>
            <person name="Rodriguez-Torres A.M."/>
            <person name="Rose M."/>
            <person name="Ruzzi M."/>
            <person name="Saliola M."/>
            <person name="Sanchez-Perez M."/>
            <person name="Schaefer B."/>
            <person name="Schaefer M."/>
            <person name="Scharfe M."/>
            <person name="Schmidheini T."/>
            <person name="Schreer A."/>
            <person name="Skala J."/>
            <person name="Souciet J.-L."/>
            <person name="Steensma H.Y."/>
            <person name="Talla E."/>
            <person name="Thierry A."/>
            <person name="Vandenbol M."/>
            <person name="van der Aart Q.J.M."/>
            <person name="Van Dyck L."/>
            <person name="Vanoni M."/>
            <person name="Verhasselt P."/>
            <person name="Voet M."/>
            <person name="Volckaert G."/>
            <person name="Wambutt R."/>
            <person name="Watson M.D."/>
            <person name="Weber N."/>
            <person name="Wedler E."/>
            <person name="Wedler H."/>
            <person name="Wipfli P."/>
            <person name="Wolf K."/>
            <person name="Wright L.F."/>
            <person name="Zaccaria P."/>
            <person name="Zimmermann M."/>
            <person name="Zollner A."/>
            <person name="Kleine K."/>
        </authorList>
    </citation>
    <scope>NUCLEOTIDE SEQUENCE [LARGE SCALE GENOMIC DNA]</scope>
    <source>
        <strain>ATCC 204508 / S288c</strain>
    </source>
</reference>
<reference key="3">
    <citation type="journal article" date="2014" name="G3 (Bethesda)">
        <title>The reference genome sequence of Saccharomyces cerevisiae: Then and now.</title>
        <authorList>
            <person name="Engel S.R."/>
            <person name="Dietrich F.S."/>
            <person name="Fisk D.G."/>
            <person name="Binkley G."/>
            <person name="Balakrishnan R."/>
            <person name="Costanzo M.C."/>
            <person name="Dwight S.S."/>
            <person name="Hitz B.C."/>
            <person name="Karra K."/>
            <person name="Nash R.S."/>
            <person name="Weng S."/>
            <person name="Wong E.D."/>
            <person name="Lloyd P."/>
            <person name="Skrzypek M.S."/>
            <person name="Miyasato S.R."/>
            <person name="Simison M."/>
            <person name="Cherry J.M."/>
        </authorList>
    </citation>
    <scope>GENOME REANNOTATION</scope>
    <source>
        <strain>ATCC 204508 / S288c</strain>
    </source>
</reference>
<reference key="4">
    <citation type="journal article" date="1998" name="Mol. Cell. Biol.">
        <title>Pbp1p, a factor interacting with Saccharomyces cerevisiae poly(A)-binding protein, regulates polyadenylation.</title>
        <authorList>
            <person name="Mangus D.A."/>
            <person name="Amrani N."/>
            <person name="Jacobson A."/>
        </authorList>
    </citation>
    <scope>FUNCTION</scope>
    <scope>INTERACTION WITH PAB1</scope>
    <scope>DISRUPTION PHENOTYPE</scope>
</reference>
<reference key="5">
    <citation type="journal article" date="2003" name="Nature">
        <title>Global analysis of protein localization in budding yeast.</title>
        <authorList>
            <person name="Huh W.-K."/>
            <person name="Falvo J.V."/>
            <person name="Gerke L.C."/>
            <person name="Carroll A.S."/>
            <person name="Howson R.W."/>
            <person name="Weissman J.S."/>
            <person name="O'Shea E.K."/>
        </authorList>
    </citation>
    <scope>SUBCELLULAR LOCATION [LARGE SCALE ANALYSIS]</scope>
</reference>
<reference key="6">
    <citation type="journal article" date="2006" name="Genes Dev.">
        <title>Systematic identification and functional screens of uncharacterized proteins associated with eukaryotic ribosomal complexes.</title>
        <authorList>
            <person name="Fleischer T.C."/>
            <person name="Weaver C.M."/>
            <person name="McAfee K.J."/>
            <person name="Jennings J.L."/>
            <person name="Link A.J."/>
        </authorList>
    </citation>
    <scope>INTERACTION WITH LSM12 AND PBP4</scope>
    <scope>IDENTIFICATION BY MASS SPECTROMETRY</scope>
</reference>
<reference key="7">
    <citation type="journal article" date="2003" name="Nature">
        <title>Global analysis of protein expression in yeast.</title>
        <authorList>
            <person name="Ghaemmaghami S."/>
            <person name="Huh W.-K."/>
            <person name="Bower K."/>
            <person name="Howson R.W."/>
            <person name="Belle A."/>
            <person name="Dephoure N."/>
            <person name="O'Shea E.K."/>
            <person name="Weissman J.S."/>
        </authorList>
    </citation>
    <scope>LEVEL OF PROTEIN EXPRESSION [LARGE SCALE ANALYSIS]</scope>
</reference>
<reference key="8">
    <citation type="journal article" date="2003" name="Proc. Natl. Acad. Sci. U.S.A.">
        <title>The proteome of Saccharomyces cerevisiae mitochondria.</title>
        <authorList>
            <person name="Sickmann A."/>
            <person name="Reinders J."/>
            <person name="Wagner Y."/>
            <person name="Joppich C."/>
            <person name="Zahedi R.P."/>
            <person name="Meyer H.E."/>
            <person name="Schoenfisch B."/>
            <person name="Perschil I."/>
            <person name="Chacinska A."/>
            <person name="Guiard B."/>
            <person name="Rehling P."/>
            <person name="Pfanner N."/>
            <person name="Meisinger C."/>
        </authorList>
    </citation>
    <scope>SUBCELLULAR LOCATION [LARGE SCALE ANALYSIS]</scope>
    <source>
        <strain>ATCC 76625 / YPH499</strain>
    </source>
</reference>
<reference key="9">
    <citation type="journal article" date="2004" name="Mol. Cell. Biol.">
        <title>Posttranscriptional regulation of HO expression by the Mkt1-Pbp1 complex.</title>
        <authorList>
            <person name="Tadauchi T."/>
            <person name="Inada T."/>
            <person name="Matsumoto K."/>
            <person name="Irie K."/>
        </authorList>
    </citation>
    <scope>FUNCTION</scope>
    <scope>INTERACTION WITH MKT1</scope>
    <scope>SUBUNIT</scope>
    <scope>SUBCELLULAR LOCATION</scope>
    <scope>DISRUPTION PHENOTYPE</scope>
</reference>
<reference key="10">
    <citation type="journal article" date="2004" name="Mol. Cell. Biol.">
        <title>Identification of factors regulating poly(A) tail synthesis and maturation.</title>
        <authorList>
            <person name="Mangus D.A."/>
            <person name="Smith M.M."/>
            <person name="McSweeney J.M."/>
            <person name="Jacobson A."/>
        </authorList>
    </citation>
    <scope>FUNCTION</scope>
    <scope>INTERACTION WITH FIR1 AND PBP4</scope>
</reference>
<reference key="11">
    <citation type="journal article" date="2007" name="J. Proteome Res.">
        <title>Large-scale phosphorylation analysis of alpha-factor-arrested Saccharomyces cerevisiae.</title>
        <authorList>
            <person name="Li X."/>
            <person name="Gerber S.A."/>
            <person name="Rudner A.D."/>
            <person name="Beausoleil S.A."/>
            <person name="Haas W."/>
            <person name="Villen J."/>
            <person name="Elias J.E."/>
            <person name="Gygi S.P."/>
        </authorList>
    </citation>
    <scope>PHOSPHORYLATION [LARGE SCALE ANALYSIS] AT SER-106 AND SER-436</scope>
    <scope>IDENTIFICATION BY MASS SPECTROMETRY [LARGE SCALE ANALYSIS]</scope>
    <source>
        <strain>ADR376</strain>
    </source>
</reference>
<reference key="12">
    <citation type="journal article" date="2008" name="Mol. Cell. Proteomics">
        <title>A multidimensional chromatography technology for in-depth phosphoproteome analysis.</title>
        <authorList>
            <person name="Albuquerque C.P."/>
            <person name="Smolka M.B."/>
            <person name="Payne S.H."/>
            <person name="Bafna V."/>
            <person name="Eng J."/>
            <person name="Zhou H."/>
        </authorList>
    </citation>
    <scope>PHOSPHORYLATION [LARGE SCALE ANALYSIS] AT SER-106; SER-215 AND SER-436</scope>
    <scope>IDENTIFICATION BY MASS SPECTROMETRY [LARGE SCALE ANALYSIS]</scope>
</reference>
<reference key="13">
    <citation type="journal article" date="2009" name="Science">
        <title>Global analysis of Cdk1 substrate phosphorylation sites provides insights into evolution.</title>
        <authorList>
            <person name="Holt L.J."/>
            <person name="Tuch B.B."/>
            <person name="Villen J."/>
            <person name="Johnson A.D."/>
            <person name="Gygi S.P."/>
            <person name="Morgan D.O."/>
        </authorList>
    </citation>
    <scope>PHOSPHORYLATION [LARGE SCALE ANALYSIS] AT SER-106 AND THR-193</scope>
    <scope>IDENTIFICATION BY MASS SPECTROMETRY [LARGE SCALE ANALYSIS]</scope>
</reference>
<reference key="14">
    <citation type="journal article" date="2010" name="Mol. Cell">
        <title>Initiation of the TORC1-regulated G0 program requires Igo1/2, which license specific mRNAs to evade degradation via the 5'-3' mRNA decay pathway.</title>
        <authorList>
            <person name="Talarek N."/>
            <person name="Cameroni E."/>
            <person name="Jaquenoud M."/>
            <person name="Luo X."/>
            <person name="Bontron S."/>
            <person name="Lippman S."/>
            <person name="Devgan G."/>
            <person name="Snyder M."/>
            <person name="Broach J.R."/>
            <person name="De Virgilio C."/>
        </authorList>
    </citation>
    <scope>INTERACTION WITH IGO1</scope>
</reference>
<reference key="15">
    <citation type="journal article" date="2012" name="Proteomics">
        <title>Sites of ubiquitin attachment in Saccharomyces cerevisiae.</title>
        <authorList>
            <person name="Starita L.M."/>
            <person name="Lo R.S."/>
            <person name="Eng J.K."/>
            <person name="von Haller P.D."/>
            <person name="Fields S."/>
        </authorList>
    </citation>
    <scope>UBIQUITINATION [LARGE SCALE ANALYSIS] AT LYS-344</scope>
    <scope>IDENTIFICATION BY MASS SPECTROMETRY [LARGE SCALE ANALYSIS]</scope>
</reference>
<comment type="function">
    <text evidence="6 7 10">Involved in pre-mRNA polyadenylation (PubMed:15121841, PubMed:9819425). May act to repress the ability of PAB1 to negatively regulate polyadenylation (PubMed:9819425). Negative regulator of poly(A) nuclease (PAN) activity (PubMed:15121841). Promotes mating-type switching in mother cells by positively regulating HO mRNA translation (PubMed:15082763). Localizes MKT1 to polysomes (PubMed:15082763).</text>
</comment>
<comment type="subunit">
    <text evidence="6 7 8 9 10">Interacts (via C-terminus) with MKT1 (via C-terminus) (PubMed:15082763). Interacts with FIR1, IGO1, LSM12, PBP4 and PAB1 (PubMed:15121841, PubMed:16702403, PubMed:20471941, PubMed:9819425).</text>
</comment>
<comment type="interaction">
    <interactant intactId="EBI-12961">
        <id>P53297</id>
    </interactant>
    <interactant intactId="EBI-24700">
        <id>P38828</id>
        <label>LSM12</label>
    </interactant>
    <organismsDiffer>false</organismsDiffer>
    <experiments>5</experiments>
</comment>
<comment type="interaction">
    <interactant intactId="EBI-12961">
        <id>P53297</id>
    </interactant>
    <interactant intactId="EBI-10983">
        <id>P40850</id>
        <label>MKT1</label>
    </interactant>
    <organismsDiffer>false</organismsDiffer>
    <experiments>3</experiments>
</comment>
<comment type="subcellular location">
    <subcellularLocation>
        <location evidence="3 6">Cytoplasm</location>
    </subcellularLocation>
    <subcellularLocation>
        <location evidence="3">Nucleus</location>
    </subcellularLocation>
    <subcellularLocation>
        <location evidence="5">Mitochondrion</location>
    </subcellularLocation>
    <text evidence="6">Localizes to polysomes.</text>
</comment>
<comment type="disruption phenotype">
    <text evidence="6 10">Abnormal mRNA processing; 3' termini are cleaved but transcripts lack full-length poly(A) tails (PubMed:9819425). Decreases HO mRNA translation (PubMed:15082763).</text>
</comment>
<comment type="miscellaneous">
    <text evidence="4">Present with 2870 molecules/cell in log phase SD medium.</text>
</comment>
<comment type="similarity">
    <text evidence="11">Belongs to the ataxin-2 family.</text>
</comment>
<proteinExistence type="evidence at protein level"/>
<dbReference type="EMBL" id="U46931">
    <property type="protein sequence ID" value="AAB94294.1"/>
    <property type="molecule type" value="Genomic_DNA"/>
</dbReference>
<dbReference type="EMBL" id="Z72963">
    <property type="protein sequence ID" value="CAA97204.1"/>
    <property type="molecule type" value="Genomic_DNA"/>
</dbReference>
<dbReference type="EMBL" id="BK006941">
    <property type="protein sequence ID" value="DAA08273.1"/>
    <property type="molecule type" value="Genomic_DNA"/>
</dbReference>
<dbReference type="PIR" id="S64492">
    <property type="entry name" value="S64492"/>
</dbReference>
<dbReference type="RefSeq" id="NP_011694.3">
    <property type="nucleotide sequence ID" value="NM_001181307.3"/>
</dbReference>
<dbReference type="SMR" id="P53297"/>
<dbReference type="BioGRID" id="33430">
    <property type="interactions" value="300"/>
</dbReference>
<dbReference type="ComplexPortal" id="CPX-1295">
    <property type="entry name" value="MKT1-PBP1 translation regulation complex"/>
</dbReference>
<dbReference type="DIP" id="DIP-2464N"/>
<dbReference type="FunCoup" id="P53297">
    <property type="interactions" value="135"/>
</dbReference>
<dbReference type="IntAct" id="P53297">
    <property type="interactions" value="32"/>
</dbReference>
<dbReference type="MINT" id="P53297"/>
<dbReference type="STRING" id="4932.YGR178C"/>
<dbReference type="GlyGen" id="P53297">
    <property type="glycosylation" value="1 site, 1 O-linked glycan (1 site)"/>
</dbReference>
<dbReference type="iPTMnet" id="P53297"/>
<dbReference type="PaxDb" id="4932-YGR178C"/>
<dbReference type="PeptideAtlas" id="P53297"/>
<dbReference type="EnsemblFungi" id="YGR178C_mRNA">
    <property type="protein sequence ID" value="YGR178C"/>
    <property type="gene ID" value="YGR178C"/>
</dbReference>
<dbReference type="GeneID" id="853089"/>
<dbReference type="KEGG" id="sce:YGR178C"/>
<dbReference type="AGR" id="SGD:S000003410"/>
<dbReference type="SGD" id="S000003410">
    <property type="gene designation" value="PBP1"/>
</dbReference>
<dbReference type="VEuPathDB" id="FungiDB:YGR178C"/>
<dbReference type="eggNOG" id="KOG2375">
    <property type="taxonomic scope" value="Eukaryota"/>
</dbReference>
<dbReference type="GeneTree" id="ENSGT00940000174882"/>
<dbReference type="HOGENOM" id="CLU_009985_0_0_1"/>
<dbReference type="InParanoid" id="P53297"/>
<dbReference type="OMA" id="YFTAPTW"/>
<dbReference type="OrthoDB" id="2275718at2759"/>
<dbReference type="BioCyc" id="YEAST:G3O-30871-MONOMER"/>
<dbReference type="BioGRID-ORCS" id="853089">
    <property type="hits" value="3 hits in 10 CRISPR screens"/>
</dbReference>
<dbReference type="CD-CODE" id="1AFBA5D2">
    <property type="entry name" value="Synthetic Condensate 000248"/>
</dbReference>
<dbReference type="CD-CODE" id="A777E0F8">
    <property type="entry name" value="P-body"/>
</dbReference>
<dbReference type="CD-CODE" id="E03F929F">
    <property type="entry name" value="Stress granule"/>
</dbReference>
<dbReference type="PRO" id="PR:P53297"/>
<dbReference type="Proteomes" id="UP000002311">
    <property type="component" value="Chromosome VII"/>
</dbReference>
<dbReference type="RNAct" id="P53297">
    <property type="molecule type" value="protein"/>
</dbReference>
<dbReference type="GO" id="GO:0005737">
    <property type="term" value="C:cytoplasm"/>
    <property type="evidence" value="ECO:0007005"/>
    <property type="project" value="SGD"/>
</dbReference>
<dbReference type="GO" id="GO:0010494">
    <property type="term" value="C:cytoplasmic stress granule"/>
    <property type="evidence" value="ECO:0000314"/>
    <property type="project" value="SGD"/>
</dbReference>
<dbReference type="GO" id="GO:0005829">
    <property type="term" value="C:cytosol"/>
    <property type="evidence" value="ECO:0000314"/>
    <property type="project" value="UniProtKB"/>
</dbReference>
<dbReference type="GO" id="GO:0005739">
    <property type="term" value="C:mitochondrion"/>
    <property type="evidence" value="ECO:0007005"/>
    <property type="project" value="SGD"/>
</dbReference>
<dbReference type="GO" id="GO:0005634">
    <property type="term" value="C:nucleus"/>
    <property type="evidence" value="ECO:0007005"/>
    <property type="project" value="SGD"/>
</dbReference>
<dbReference type="GO" id="GO:0005840">
    <property type="term" value="C:ribosome"/>
    <property type="evidence" value="ECO:0000353"/>
    <property type="project" value="ComplexPortal"/>
</dbReference>
<dbReference type="GO" id="GO:0003729">
    <property type="term" value="F:mRNA binding"/>
    <property type="evidence" value="ECO:0007005"/>
    <property type="project" value="SGD"/>
</dbReference>
<dbReference type="GO" id="GO:0044877">
    <property type="term" value="F:protein-containing complex binding"/>
    <property type="evidence" value="ECO:0000314"/>
    <property type="project" value="SGD"/>
</dbReference>
<dbReference type="GO" id="GO:0042149">
    <property type="term" value="P:cellular response to glucose starvation"/>
    <property type="evidence" value="ECO:0000315"/>
    <property type="project" value="SGD"/>
</dbReference>
<dbReference type="GO" id="GO:0043007">
    <property type="term" value="P:maintenance of rDNA"/>
    <property type="evidence" value="ECO:0000315"/>
    <property type="project" value="SGD"/>
</dbReference>
<dbReference type="GO" id="GO:1904262">
    <property type="term" value="P:negative regulation of TORC1 signaling"/>
    <property type="evidence" value="ECO:0000315"/>
    <property type="project" value="SGD"/>
</dbReference>
<dbReference type="GO" id="GO:0045727">
    <property type="term" value="P:positive regulation of translation"/>
    <property type="evidence" value="ECO:0000315"/>
    <property type="project" value="SGD"/>
</dbReference>
<dbReference type="GO" id="GO:0031494">
    <property type="term" value="P:regulation of mating type switching"/>
    <property type="evidence" value="ECO:0000303"/>
    <property type="project" value="ComplexPortal"/>
</dbReference>
<dbReference type="GO" id="GO:1901524">
    <property type="term" value="P:regulation of mitophagy"/>
    <property type="evidence" value="ECO:0000315"/>
    <property type="project" value="SGD"/>
</dbReference>
<dbReference type="GO" id="GO:0006417">
    <property type="term" value="P:regulation of translation"/>
    <property type="evidence" value="ECO:0000303"/>
    <property type="project" value="ComplexPortal"/>
</dbReference>
<dbReference type="GO" id="GO:0034063">
    <property type="term" value="P:stress granule assembly"/>
    <property type="evidence" value="ECO:0000315"/>
    <property type="project" value="SGD"/>
</dbReference>
<dbReference type="InterPro" id="IPR045117">
    <property type="entry name" value="ATXN2-like"/>
</dbReference>
<dbReference type="InterPro" id="IPR009604">
    <property type="entry name" value="LsmAD_domain"/>
</dbReference>
<dbReference type="InterPro" id="IPR047575">
    <property type="entry name" value="Sm"/>
</dbReference>
<dbReference type="InterPro" id="IPR025852">
    <property type="entry name" value="SM_dom_ATX"/>
</dbReference>
<dbReference type="PANTHER" id="PTHR12854">
    <property type="entry name" value="ATAXIN 2-RELATED"/>
    <property type="match status" value="1"/>
</dbReference>
<dbReference type="PANTHER" id="PTHR12854:SF7">
    <property type="entry name" value="ATAXIN-2 HOMOLOG"/>
    <property type="match status" value="1"/>
</dbReference>
<dbReference type="Pfam" id="PF06741">
    <property type="entry name" value="LsmAD"/>
    <property type="match status" value="1"/>
</dbReference>
<dbReference type="Pfam" id="PF14438">
    <property type="entry name" value="SM-ATX"/>
    <property type="match status" value="1"/>
</dbReference>
<dbReference type="SMART" id="SM01272">
    <property type="entry name" value="LsmAD"/>
    <property type="match status" value="1"/>
</dbReference>
<dbReference type="PROSITE" id="PS52002">
    <property type="entry name" value="SM"/>
    <property type="match status" value="1"/>
</dbReference>
<name>PBP1_YEAST</name>
<organism>
    <name type="scientific">Saccharomyces cerevisiae (strain ATCC 204508 / S288c)</name>
    <name type="common">Baker's yeast</name>
    <dbReference type="NCBI Taxonomy" id="559292"/>
    <lineage>
        <taxon>Eukaryota</taxon>
        <taxon>Fungi</taxon>
        <taxon>Dikarya</taxon>
        <taxon>Ascomycota</taxon>
        <taxon>Saccharomycotina</taxon>
        <taxon>Saccharomycetes</taxon>
        <taxon>Saccharomycetales</taxon>
        <taxon>Saccharomycetaceae</taxon>
        <taxon>Saccharomyces</taxon>
    </lineage>
</organism>